<accession>Q5LXM9</accession>
<protein>
    <recommendedName>
        <fullName evidence="2">Histidine--tRNA ligase</fullName>
        <ecNumber evidence="2">6.1.1.21</ecNumber>
    </recommendedName>
    <alternativeName>
        <fullName evidence="2">Histidyl-tRNA synthetase</fullName>
        <shortName evidence="2">HisRS</shortName>
    </alternativeName>
</protein>
<proteinExistence type="inferred from homology"/>
<evidence type="ECO:0000250" key="1"/>
<evidence type="ECO:0000255" key="2">
    <source>
        <dbReference type="HAMAP-Rule" id="MF_00127"/>
    </source>
</evidence>
<gene>
    <name evidence="2" type="primary">hisS</name>
    <name type="ordered locus">str1971</name>
</gene>
<dbReference type="EC" id="6.1.1.21" evidence="2"/>
<dbReference type="EMBL" id="CP000024">
    <property type="protein sequence ID" value="AAV63483.1"/>
    <property type="molecule type" value="Genomic_DNA"/>
</dbReference>
<dbReference type="RefSeq" id="WP_002946362.1">
    <property type="nucleotide sequence ID" value="NC_006449.1"/>
</dbReference>
<dbReference type="SMR" id="Q5LXM9"/>
<dbReference type="GeneID" id="66899697"/>
<dbReference type="KEGG" id="stc:str1971"/>
<dbReference type="HOGENOM" id="CLU_025113_1_1_9"/>
<dbReference type="GO" id="GO:0005737">
    <property type="term" value="C:cytoplasm"/>
    <property type="evidence" value="ECO:0007669"/>
    <property type="project" value="UniProtKB-SubCell"/>
</dbReference>
<dbReference type="GO" id="GO:0005524">
    <property type="term" value="F:ATP binding"/>
    <property type="evidence" value="ECO:0007669"/>
    <property type="project" value="UniProtKB-UniRule"/>
</dbReference>
<dbReference type="GO" id="GO:0140096">
    <property type="term" value="F:catalytic activity, acting on a protein"/>
    <property type="evidence" value="ECO:0007669"/>
    <property type="project" value="UniProtKB-ARBA"/>
</dbReference>
<dbReference type="GO" id="GO:0004821">
    <property type="term" value="F:histidine-tRNA ligase activity"/>
    <property type="evidence" value="ECO:0007669"/>
    <property type="project" value="UniProtKB-UniRule"/>
</dbReference>
<dbReference type="GO" id="GO:0016740">
    <property type="term" value="F:transferase activity"/>
    <property type="evidence" value="ECO:0007669"/>
    <property type="project" value="UniProtKB-ARBA"/>
</dbReference>
<dbReference type="GO" id="GO:0006427">
    <property type="term" value="P:histidyl-tRNA aminoacylation"/>
    <property type="evidence" value="ECO:0007669"/>
    <property type="project" value="UniProtKB-UniRule"/>
</dbReference>
<dbReference type="CDD" id="cd00773">
    <property type="entry name" value="HisRS-like_core"/>
    <property type="match status" value="1"/>
</dbReference>
<dbReference type="CDD" id="cd00859">
    <property type="entry name" value="HisRS_anticodon"/>
    <property type="match status" value="1"/>
</dbReference>
<dbReference type="FunFam" id="3.30.930.10:FF:000005">
    <property type="entry name" value="Histidine--tRNA ligase"/>
    <property type="match status" value="1"/>
</dbReference>
<dbReference type="Gene3D" id="3.40.50.800">
    <property type="entry name" value="Anticodon-binding domain"/>
    <property type="match status" value="1"/>
</dbReference>
<dbReference type="Gene3D" id="3.30.930.10">
    <property type="entry name" value="Bira Bifunctional Protein, Domain 2"/>
    <property type="match status" value="1"/>
</dbReference>
<dbReference type="HAMAP" id="MF_00127">
    <property type="entry name" value="His_tRNA_synth"/>
    <property type="match status" value="1"/>
</dbReference>
<dbReference type="InterPro" id="IPR006195">
    <property type="entry name" value="aa-tRNA-synth_II"/>
</dbReference>
<dbReference type="InterPro" id="IPR045864">
    <property type="entry name" value="aa-tRNA-synth_II/BPL/LPL"/>
</dbReference>
<dbReference type="InterPro" id="IPR004154">
    <property type="entry name" value="Anticodon-bd"/>
</dbReference>
<dbReference type="InterPro" id="IPR036621">
    <property type="entry name" value="Anticodon-bd_dom_sf"/>
</dbReference>
<dbReference type="InterPro" id="IPR015807">
    <property type="entry name" value="His-tRNA-ligase"/>
</dbReference>
<dbReference type="InterPro" id="IPR041715">
    <property type="entry name" value="HisRS-like_core"/>
</dbReference>
<dbReference type="InterPro" id="IPR004516">
    <property type="entry name" value="HisRS/HisZ"/>
</dbReference>
<dbReference type="InterPro" id="IPR033656">
    <property type="entry name" value="HisRS_anticodon"/>
</dbReference>
<dbReference type="NCBIfam" id="TIGR00442">
    <property type="entry name" value="hisS"/>
    <property type="match status" value="1"/>
</dbReference>
<dbReference type="PANTHER" id="PTHR43707:SF1">
    <property type="entry name" value="HISTIDINE--TRNA LIGASE, MITOCHONDRIAL-RELATED"/>
    <property type="match status" value="1"/>
</dbReference>
<dbReference type="PANTHER" id="PTHR43707">
    <property type="entry name" value="HISTIDYL-TRNA SYNTHETASE"/>
    <property type="match status" value="1"/>
</dbReference>
<dbReference type="Pfam" id="PF03129">
    <property type="entry name" value="HGTP_anticodon"/>
    <property type="match status" value="1"/>
</dbReference>
<dbReference type="Pfam" id="PF13393">
    <property type="entry name" value="tRNA-synt_His"/>
    <property type="match status" value="1"/>
</dbReference>
<dbReference type="PIRSF" id="PIRSF001549">
    <property type="entry name" value="His-tRNA_synth"/>
    <property type="match status" value="1"/>
</dbReference>
<dbReference type="SUPFAM" id="SSF52954">
    <property type="entry name" value="Class II aaRS ABD-related"/>
    <property type="match status" value="1"/>
</dbReference>
<dbReference type="SUPFAM" id="SSF55681">
    <property type="entry name" value="Class II aaRS and biotin synthetases"/>
    <property type="match status" value="1"/>
</dbReference>
<dbReference type="PROSITE" id="PS50862">
    <property type="entry name" value="AA_TRNA_LIGASE_II"/>
    <property type="match status" value="1"/>
</dbReference>
<organism>
    <name type="scientific">Streptococcus thermophilus (strain CNRZ 1066)</name>
    <dbReference type="NCBI Taxonomy" id="299768"/>
    <lineage>
        <taxon>Bacteria</taxon>
        <taxon>Bacillati</taxon>
        <taxon>Bacillota</taxon>
        <taxon>Bacilli</taxon>
        <taxon>Lactobacillales</taxon>
        <taxon>Streptococcaceae</taxon>
        <taxon>Streptococcus</taxon>
    </lineage>
</organism>
<sequence length="426" mass="48379">MKLQKPKGTQDILPGDSAKWQYVENVARETFKKYNYGEIRTPMFEHYEVISRSVGDTTDIVTKEMYDFHDKGDRHITLRPEGTAPVVRSYVENKLFAPEVQKPVKVYYIGSMFRYERPQAGRLREFHQLGVECFGSKNPATDVETIAMAYQLFNTLGIKDVTLHLNSLGNTDSRLAYRQALIDYLTPMRESLSKDSQRRLEENPLRVLDSKEKEDKVAVENAPSILDYLDEESQTHFDEVRAMLDSLNIPYVIDTNMVRGLDYYNHTIFEFITNIDKSELTICAGGRYDSLVEYFGGPETAGFGFGLGLERLLLVLDKQGIKLPVEESLDVYIAVLGSGANGKALELVQSIRYQGFKAERDYLGRKIKAQFKSADTFKAKTVITLGESEVESGVVKVKNNATREEVTVSFEELTTNFATVLKQLEK</sequence>
<reference key="1">
    <citation type="journal article" date="2004" name="Nat. Biotechnol.">
        <title>Complete sequence and comparative genome analysis of the dairy bacterium Streptococcus thermophilus.</title>
        <authorList>
            <person name="Bolotin A."/>
            <person name="Quinquis B."/>
            <person name="Renault P."/>
            <person name="Sorokin A."/>
            <person name="Ehrlich S.D."/>
            <person name="Kulakauskas S."/>
            <person name="Lapidus A."/>
            <person name="Goltsman E."/>
            <person name="Mazur M."/>
            <person name="Pusch G.D."/>
            <person name="Fonstein M."/>
            <person name="Overbeek R."/>
            <person name="Kyprides N."/>
            <person name="Purnelle B."/>
            <person name="Prozzi D."/>
            <person name="Ngui K."/>
            <person name="Masuy D."/>
            <person name="Hancy F."/>
            <person name="Burteau S."/>
            <person name="Boutry M."/>
            <person name="Delcour J."/>
            <person name="Goffeau A."/>
            <person name="Hols P."/>
        </authorList>
    </citation>
    <scope>NUCLEOTIDE SEQUENCE [LARGE SCALE GENOMIC DNA]</scope>
    <source>
        <strain>CNRZ 1066</strain>
    </source>
</reference>
<name>SYH_STRT1</name>
<feature type="initiator methionine" description="Removed" evidence="1">
    <location>
        <position position="1"/>
    </location>
</feature>
<feature type="chain" id="PRO_0000136272" description="Histidine--tRNA ligase">
    <location>
        <begin position="2"/>
        <end position="426"/>
    </location>
</feature>
<comment type="catalytic activity">
    <reaction evidence="2">
        <text>tRNA(His) + L-histidine + ATP = L-histidyl-tRNA(His) + AMP + diphosphate + H(+)</text>
        <dbReference type="Rhea" id="RHEA:17313"/>
        <dbReference type="Rhea" id="RHEA-COMP:9665"/>
        <dbReference type="Rhea" id="RHEA-COMP:9689"/>
        <dbReference type="ChEBI" id="CHEBI:15378"/>
        <dbReference type="ChEBI" id="CHEBI:30616"/>
        <dbReference type="ChEBI" id="CHEBI:33019"/>
        <dbReference type="ChEBI" id="CHEBI:57595"/>
        <dbReference type="ChEBI" id="CHEBI:78442"/>
        <dbReference type="ChEBI" id="CHEBI:78527"/>
        <dbReference type="ChEBI" id="CHEBI:456215"/>
        <dbReference type="EC" id="6.1.1.21"/>
    </reaction>
</comment>
<comment type="subunit">
    <text evidence="2">Homodimer.</text>
</comment>
<comment type="subcellular location">
    <subcellularLocation>
        <location evidence="2">Cytoplasm</location>
    </subcellularLocation>
</comment>
<comment type="similarity">
    <text evidence="2">Belongs to the class-II aminoacyl-tRNA synthetase family.</text>
</comment>
<keyword id="KW-0030">Aminoacyl-tRNA synthetase</keyword>
<keyword id="KW-0067">ATP-binding</keyword>
<keyword id="KW-0963">Cytoplasm</keyword>
<keyword id="KW-0436">Ligase</keyword>
<keyword id="KW-0547">Nucleotide-binding</keyword>
<keyword id="KW-0648">Protein biosynthesis</keyword>